<keyword id="KW-0963">Cytoplasm</keyword>
<keyword id="KW-0238">DNA-binding</keyword>
<keyword id="KW-1185">Reference proteome</keyword>
<feature type="chain" id="PRO_1000078770" description="Nucleoid-associated protein YbaB">
    <location>
        <begin position="1"/>
        <end position="109"/>
    </location>
</feature>
<dbReference type="EMBL" id="CP000880">
    <property type="protein sequence ID" value="ABX22310.1"/>
    <property type="molecule type" value="Genomic_DNA"/>
</dbReference>
<dbReference type="SMR" id="A9MLY8"/>
<dbReference type="STRING" id="41514.SARI_02449"/>
<dbReference type="KEGG" id="ses:SARI_02449"/>
<dbReference type="HOGENOM" id="CLU_140930_0_0_6"/>
<dbReference type="Proteomes" id="UP000002084">
    <property type="component" value="Chromosome"/>
</dbReference>
<dbReference type="GO" id="GO:0043590">
    <property type="term" value="C:bacterial nucleoid"/>
    <property type="evidence" value="ECO:0007669"/>
    <property type="project" value="UniProtKB-UniRule"/>
</dbReference>
<dbReference type="GO" id="GO:0005829">
    <property type="term" value="C:cytosol"/>
    <property type="evidence" value="ECO:0007669"/>
    <property type="project" value="TreeGrafter"/>
</dbReference>
<dbReference type="GO" id="GO:0003677">
    <property type="term" value="F:DNA binding"/>
    <property type="evidence" value="ECO:0007669"/>
    <property type="project" value="UniProtKB-UniRule"/>
</dbReference>
<dbReference type="FunFam" id="3.30.1310.10:FF:000001">
    <property type="entry name" value="Nucleoid-associated protein YbaB"/>
    <property type="match status" value="1"/>
</dbReference>
<dbReference type="Gene3D" id="3.30.1310.10">
    <property type="entry name" value="Nucleoid-associated protein YbaB-like domain"/>
    <property type="match status" value="1"/>
</dbReference>
<dbReference type="HAMAP" id="MF_00274">
    <property type="entry name" value="DNA_YbaB_EbfC"/>
    <property type="match status" value="1"/>
</dbReference>
<dbReference type="InterPro" id="IPR036894">
    <property type="entry name" value="YbaB-like_sf"/>
</dbReference>
<dbReference type="InterPro" id="IPR004401">
    <property type="entry name" value="YbaB/EbfC"/>
</dbReference>
<dbReference type="NCBIfam" id="TIGR00103">
    <property type="entry name" value="DNA_YbaB_EbfC"/>
    <property type="match status" value="1"/>
</dbReference>
<dbReference type="PANTHER" id="PTHR33449">
    <property type="entry name" value="NUCLEOID-ASSOCIATED PROTEIN YBAB"/>
    <property type="match status" value="1"/>
</dbReference>
<dbReference type="PANTHER" id="PTHR33449:SF1">
    <property type="entry name" value="NUCLEOID-ASSOCIATED PROTEIN YBAB"/>
    <property type="match status" value="1"/>
</dbReference>
<dbReference type="Pfam" id="PF02575">
    <property type="entry name" value="YbaB_DNA_bd"/>
    <property type="match status" value="1"/>
</dbReference>
<dbReference type="PIRSF" id="PIRSF004555">
    <property type="entry name" value="UCP004555"/>
    <property type="match status" value="1"/>
</dbReference>
<dbReference type="SUPFAM" id="SSF82607">
    <property type="entry name" value="YbaB-like"/>
    <property type="match status" value="1"/>
</dbReference>
<comment type="function">
    <text evidence="1">Binds to DNA and alters its conformation. May be involved in regulation of gene expression, nucleoid organization and DNA protection.</text>
</comment>
<comment type="subunit">
    <text evidence="1">Homodimer.</text>
</comment>
<comment type="subcellular location">
    <subcellularLocation>
        <location evidence="1">Cytoplasm</location>
        <location evidence="1">Nucleoid</location>
    </subcellularLocation>
</comment>
<comment type="similarity">
    <text evidence="1">Belongs to the YbaB/EbfC family.</text>
</comment>
<organism>
    <name type="scientific">Salmonella arizonae (strain ATCC BAA-731 / CDC346-86 / RSK2980)</name>
    <dbReference type="NCBI Taxonomy" id="41514"/>
    <lineage>
        <taxon>Bacteria</taxon>
        <taxon>Pseudomonadati</taxon>
        <taxon>Pseudomonadota</taxon>
        <taxon>Gammaproteobacteria</taxon>
        <taxon>Enterobacterales</taxon>
        <taxon>Enterobacteriaceae</taxon>
        <taxon>Salmonella</taxon>
    </lineage>
</organism>
<sequence length="109" mass="12015">MFGKGGLGNLMKQAQQMQEKMQKMQEEIAQLEVTGESGAGLVKVTINGAHNCRRVEIDPSLLEDDKEMLEDLVAAAFNDAARRIEETQKEKMASVSSGMQLPPGFKMPF</sequence>
<reference key="1">
    <citation type="submission" date="2007-11" db="EMBL/GenBank/DDBJ databases">
        <authorList>
            <consortium name="The Salmonella enterica serovar Arizonae Genome Sequencing Project"/>
            <person name="McClelland M."/>
            <person name="Sanderson E.K."/>
            <person name="Porwollik S."/>
            <person name="Spieth J."/>
            <person name="Clifton W.S."/>
            <person name="Fulton R."/>
            <person name="Chunyan W."/>
            <person name="Wollam A."/>
            <person name="Shah N."/>
            <person name="Pepin K."/>
            <person name="Bhonagiri V."/>
            <person name="Nash W."/>
            <person name="Johnson M."/>
            <person name="Thiruvilangam P."/>
            <person name="Wilson R."/>
        </authorList>
    </citation>
    <scope>NUCLEOTIDE SEQUENCE [LARGE SCALE GENOMIC DNA]</scope>
    <source>
        <strain>ATCC BAA-731 / CDC346-86 / RSK2980</strain>
    </source>
</reference>
<evidence type="ECO:0000255" key="1">
    <source>
        <dbReference type="HAMAP-Rule" id="MF_00274"/>
    </source>
</evidence>
<name>YBAB_SALAR</name>
<gene>
    <name evidence="1" type="primary">ybaB</name>
    <name type="ordered locus">SARI_02449</name>
</gene>
<accession>A9MLY8</accession>
<protein>
    <recommendedName>
        <fullName evidence="1">Nucleoid-associated protein YbaB</fullName>
    </recommendedName>
</protein>
<proteinExistence type="inferred from homology"/>